<sequence length="293" mass="31905">MPWIQLKLNTTGANAEDLSDALMEAGAVSITFQDTHDTPVFEPLPGETRLWGDTDVIGLFDAETDMKEVVAILENHPLLGAGFAHKIEQLEDKDWEREWMDNFHPMRFGERLWICPSWRDVPDENAVNVMLDPGLAFGTGTHPTTSLCLQWLDSLDLTGKTVIDFGCGSGILAIAALKLGAAKAIGIDIDPQAIQASRDNAERNGVSDRLELYLPKDQPEEMKADVVVANILAGPLRELAPLISVLPVSGGLLGLSGILASQAESVCEAYADSFALDPVVEKEEWCRITGRKN</sequence>
<name>PRMA_ECO7I</name>
<comment type="function">
    <text evidence="1">Methylates ribosomal protein L11.</text>
</comment>
<comment type="catalytic activity">
    <reaction evidence="1">
        <text>L-lysyl-[protein] + 3 S-adenosyl-L-methionine = N(6),N(6),N(6)-trimethyl-L-lysyl-[protein] + 3 S-adenosyl-L-homocysteine + 3 H(+)</text>
        <dbReference type="Rhea" id="RHEA:54192"/>
        <dbReference type="Rhea" id="RHEA-COMP:9752"/>
        <dbReference type="Rhea" id="RHEA-COMP:13826"/>
        <dbReference type="ChEBI" id="CHEBI:15378"/>
        <dbReference type="ChEBI" id="CHEBI:29969"/>
        <dbReference type="ChEBI" id="CHEBI:57856"/>
        <dbReference type="ChEBI" id="CHEBI:59789"/>
        <dbReference type="ChEBI" id="CHEBI:61961"/>
    </reaction>
</comment>
<comment type="subcellular location">
    <subcellularLocation>
        <location evidence="1">Cytoplasm</location>
    </subcellularLocation>
</comment>
<comment type="similarity">
    <text evidence="1">Belongs to the methyltransferase superfamily. PrmA family.</text>
</comment>
<reference key="1">
    <citation type="journal article" date="2009" name="PLoS Genet.">
        <title>Organised genome dynamics in the Escherichia coli species results in highly diverse adaptive paths.</title>
        <authorList>
            <person name="Touchon M."/>
            <person name="Hoede C."/>
            <person name="Tenaillon O."/>
            <person name="Barbe V."/>
            <person name="Baeriswyl S."/>
            <person name="Bidet P."/>
            <person name="Bingen E."/>
            <person name="Bonacorsi S."/>
            <person name="Bouchier C."/>
            <person name="Bouvet O."/>
            <person name="Calteau A."/>
            <person name="Chiapello H."/>
            <person name="Clermont O."/>
            <person name="Cruveiller S."/>
            <person name="Danchin A."/>
            <person name="Diard M."/>
            <person name="Dossat C."/>
            <person name="Karoui M.E."/>
            <person name="Frapy E."/>
            <person name="Garry L."/>
            <person name="Ghigo J.M."/>
            <person name="Gilles A.M."/>
            <person name="Johnson J."/>
            <person name="Le Bouguenec C."/>
            <person name="Lescat M."/>
            <person name="Mangenot S."/>
            <person name="Martinez-Jehanne V."/>
            <person name="Matic I."/>
            <person name="Nassif X."/>
            <person name="Oztas S."/>
            <person name="Petit M.A."/>
            <person name="Pichon C."/>
            <person name="Rouy Z."/>
            <person name="Ruf C.S."/>
            <person name="Schneider D."/>
            <person name="Tourret J."/>
            <person name="Vacherie B."/>
            <person name="Vallenet D."/>
            <person name="Medigue C."/>
            <person name="Rocha E.P.C."/>
            <person name="Denamur E."/>
        </authorList>
    </citation>
    <scope>NUCLEOTIDE SEQUENCE [LARGE SCALE GENOMIC DNA]</scope>
    <source>
        <strain>IAI39 / ExPEC</strain>
    </source>
</reference>
<keyword id="KW-0963">Cytoplasm</keyword>
<keyword id="KW-0489">Methyltransferase</keyword>
<keyword id="KW-0949">S-adenosyl-L-methionine</keyword>
<keyword id="KW-0808">Transferase</keyword>
<protein>
    <recommendedName>
        <fullName evidence="1">Ribosomal protein L11 methyltransferase</fullName>
        <shortName evidence="1">L11 Mtase</shortName>
        <ecNumber evidence="1">2.1.1.-</ecNumber>
    </recommendedName>
</protein>
<proteinExistence type="inferred from homology"/>
<feature type="chain" id="PRO_1000192628" description="Ribosomal protein L11 methyltransferase">
    <location>
        <begin position="1"/>
        <end position="293"/>
    </location>
</feature>
<feature type="binding site" evidence="1">
    <location>
        <position position="145"/>
    </location>
    <ligand>
        <name>S-adenosyl-L-methionine</name>
        <dbReference type="ChEBI" id="CHEBI:59789"/>
    </ligand>
</feature>
<feature type="binding site" evidence="1">
    <location>
        <position position="166"/>
    </location>
    <ligand>
        <name>S-adenosyl-L-methionine</name>
        <dbReference type="ChEBI" id="CHEBI:59789"/>
    </ligand>
</feature>
<feature type="binding site" evidence="1">
    <location>
        <position position="188"/>
    </location>
    <ligand>
        <name>S-adenosyl-L-methionine</name>
        <dbReference type="ChEBI" id="CHEBI:59789"/>
    </ligand>
</feature>
<feature type="binding site" evidence="1">
    <location>
        <position position="230"/>
    </location>
    <ligand>
        <name>S-adenosyl-L-methionine</name>
        <dbReference type="ChEBI" id="CHEBI:59789"/>
    </ligand>
</feature>
<organism>
    <name type="scientific">Escherichia coli O7:K1 (strain IAI39 / ExPEC)</name>
    <dbReference type="NCBI Taxonomy" id="585057"/>
    <lineage>
        <taxon>Bacteria</taxon>
        <taxon>Pseudomonadati</taxon>
        <taxon>Pseudomonadota</taxon>
        <taxon>Gammaproteobacteria</taxon>
        <taxon>Enterobacterales</taxon>
        <taxon>Enterobacteriaceae</taxon>
        <taxon>Escherichia</taxon>
    </lineage>
</organism>
<evidence type="ECO:0000255" key="1">
    <source>
        <dbReference type="HAMAP-Rule" id="MF_00735"/>
    </source>
</evidence>
<dbReference type="EC" id="2.1.1.-" evidence="1"/>
<dbReference type="EMBL" id="CU928164">
    <property type="protein sequence ID" value="CAR19874.1"/>
    <property type="molecule type" value="Genomic_DNA"/>
</dbReference>
<dbReference type="RefSeq" id="WP_001145812.1">
    <property type="nucleotide sequence ID" value="NC_011750.1"/>
</dbReference>
<dbReference type="RefSeq" id="YP_002409661.1">
    <property type="nucleotide sequence ID" value="NC_011750.1"/>
</dbReference>
<dbReference type="SMR" id="B7NLI5"/>
<dbReference type="STRING" id="585057.ECIAI39_3759"/>
<dbReference type="GeneID" id="75060147"/>
<dbReference type="KEGG" id="ect:ECIAI39_3759"/>
<dbReference type="PATRIC" id="fig|585057.6.peg.3895"/>
<dbReference type="HOGENOM" id="CLU_049382_4_1_6"/>
<dbReference type="Proteomes" id="UP000000749">
    <property type="component" value="Chromosome"/>
</dbReference>
<dbReference type="GO" id="GO:0005829">
    <property type="term" value="C:cytosol"/>
    <property type="evidence" value="ECO:0007669"/>
    <property type="project" value="TreeGrafter"/>
</dbReference>
<dbReference type="GO" id="GO:0016279">
    <property type="term" value="F:protein-lysine N-methyltransferase activity"/>
    <property type="evidence" value="ECO:0007669"/>
    <property type="project" value="TreeGrafter"/>
</dbReference>
<dbReference type="GO" id="GO:0032259">
    <property type="term" value="P:methylation"/>
    <property type="evidence" value="ECO:0007669"/>
    <property type="project" value="UniProtKB-KW"/>
</dbReference>
<dbReference type="CDD" id="cd02440">
    <property type="entry name" value="AdoMet_MTases"/>
    <property type="match status" value="1"/>
</dbReference>
<dbReference type="FunFam" id="3.40.50.150:FF:000021">
    <property type="entry name" value="Ribosomal protein L11 methyltransferase"/>
    <property type="match status" value="1"/>
</dbReference>
<dbReference type="Gene3D" id="3.40.50.150">
    <property type="entry name" value="Vaccinia Virus protein VP39"/>
    <property type="match status" value="1"/>
</dbReference>
<dbReference type="HAMAP" id="MF_00735">
    <property type="entry name" value="Methyltr_PrmA"/>
    <property type="match status" value="1"/>
</dbReference>
<dbReference type="InterPro" id="IPR050078">
    <property type="entry name" value="Ribosomal_L11_MeTrfase_PrmA"/>
</dbReference>
<dbReference type="InterPro" id="IPR004498">
    <property type="entry name" value="Ribosomal_PrmA_MeTrfase"/>
</dbReference>
<dbReference type="InterPro" id="IPR029063">
    <property type="entry name" value="SAM-dependent_MTases_sf"/>
</dbReference>
<dbReference type="NCBIfam" id="TIGR00406">
    <property type="entry name" value="prmA"/>
    <property type="match status" value="1"/>
</dbReference>
<dbReference type="PANTHER" id="PTHR43648">
    <property type="entry name" value="ELECTRON TRANSFER FLAVOPROTEIN BETA SUBUNIT LYSINE METHYLTRANSFERASE"/>
    <property type="match status" value="1"/>
</dbReference>
<dbReference type="PANTHER" id="PTHR43648:SF1">
    <property type="entry name" value="ELECTRON TRANSFER FLAVOPROTEIN BETA SUBUNIT LYSINE METHYLTRANSFERASE"/>
    <property type="match status" value="1"/>
</dbReference>
<dbReference type="Pfam" id="PF06325">
    <property type="entry name" value="PrmA"/>
    <property type="match status" value="1"/>
</dbReference>
<dbReference type="PIRSF" id="PIRSF000401">
    <property type="entry name" value="RPL11_MTase"/>
    <property type="match status" value="1"/>
</dbReference>
<dbReference type="SUPFAM" id="SSF53335">
    <property type="entry name" value="S-adenosyl-L-methionine-dependent methyltransferases"/>
    <property type="match status" value="1"/>
</dbReference>
<accession>B7NLI5</accession>
<gene>
    <name evidence="1" type="primary">prmA</name>
    <name type="ordered locus">ECIAI39_3759</name>
</gene>